<organism>
    <name type="scientific">Staphylococcus epidermidis (strain ATCC 35984 / DSM 28319 / BCRC 17069 / CCUG 31568 / BM 3577 / RP62A)</name>
    <dbReference type="NCBI Taxonomy" id="176279"/>
    <lineage>
        <taxon>Bacteria</taxon>
        <taxon>Bacillati</taxon>
        <taxon>Bacillota</taxon>
        <taxon>Bacilli</taxon>
        <taxon>Bacillales</taxon>
        <taxon>Staphylococcaceae</taxon>
        <taxon>Staphylococcus</taxon>
    </lineage>
</organism>
<dbReference type="EMBL" id="CP000029">
    <property type="protein sequence ID" value="AAW54305.1"/>
    <property type="molecule type" value="Genomic_DNA"/>
</dbReference>
<dbReference type="RefSeq" id="WP_001831009.1">
    <property type="nucleotide sequence ID" value="NC_002976.3"/>
</dbReference>
<dbReference type="STRING" id="176279.SERP0923"/>
<dbReference type="KEGG" id="ser:SERP0923"/>
<dbReference type="eggNOG" id="COG4841">
    <property type="taxonomic scope" value="Bacteria"/>
</dbReference>
<dbReference type="HOGENOM" id="CLU_163967_0_0_9"/>
<dbReference type="Proteomes" id="UP000000531">
    <property type="component" value="Chromosome"/>
</dbReference>
<dbReference type="InterPro" id="IPR035903">
    <property type="entry name" value="HesB-like_dom_sf"/>
</dbReference>
<dbReference type="InterPro" id="IPR008326">
    <property type="entry name" value="PdhI-like"/>
</dbReference>
<dbReference type="PIRSF" id="PIRSF034852">
    <property type="entry name" value="UCP034852"/>
    <property type="match status" value="1"/>
</dbReference>
<dbReference type="SUPFAM" id="SSF89360">
    <property type="entry name" value="HesB-like domain"/>
    <property type="match status" value="1"/>
</dbReference>
<feature type="chain" id="PRO_0000300089" description="Uncharacterized protein SERP0923">
    <location>
        <begin position="1"/>
        <end position="98"/>
    </location>
</feature>
<sequence>MNIKLTQKAVEWFKNELDLPISNKVLQFYVKYGGEFQLKQGFSPAFTVENKDAIDIGFEQTFYEINVVIAEKDLWYFQDEKLTVDAIDHEDEIIYKRN</sequence>
<reference key="1">
    <citation type="journal article" date="2005" name="J. Bacteriol.">
        <title>Insights on evolution of virulence and resistance from the complete genome analysis of an early methicillin-resistant Staphylococcus aureus strain and a biofilm-producing methicillin-resistant Staphylococcus epidermidis strain.</title>
        <authorList>
            <person name="Gill S.R."/>
            <person name="Fouts D.E."/>
            <person name="Archer G.L."/>
            <person name="Mongodin E.F."/>
            <person name="DeBoy R.T."/>
            <person name="Ravel J."/>
            <person name="Paulsen I.T."/>
            <person name="Kolonay J.F."/>
            <person name="Brinkac L.M."/>
            <person name="Beanan M.J."/>
            <person name="Dodson R.J."/>
            <person name="Daugherty S.C."/>
            <person name="Madupu R."/>
            <person name="Angiuoli S.V."/>
            <person name="Durkin A.S."/>
            <person name="Haft D.H."/>
            <person name="Vamathevan J.J."/>
            <person name="Khouri H."/>
            <person name="Utterback T.R."/>
            <person name="Lee C."/>
            <person name="Dimitrov G."/>
            <person name="Jiang L."/>
            <person name="Qin H."/>
            <person name="Weidman J."/>
            <person name="Tran K."/>
            <person name="Kang K.H."/>
            <person name="Hance I.R."/>
            <person name="Nelson K.E."/>
            <person name="Fraser C.M."/>
        </authorList>
    </citation>
    <scope>NUCLEOTIDE SEQUENCE [LARGE SCALE GENOMIC DNA]</scope>
    <source>
        <strain>ATCC 35984 / DSM 28319 / BCRC 17069 / CCUG 31568 / BM 3577 / RP62A</strain>
    </source>
</reference>
<gene>
    <name type="ordered locus">SERP0923</name>
</gene>
<name>Y923_STAEQ</name>
<accession>Q5HPI8</accession>
<protein>
    <recommendedName>
        <fullName>Uncharacterized protein SERP0923</fullName>
    </recommendedName>
</protein>
<keyword id="KW-1185">Reference proteome</keyword>
<evidence type="ECO:0000305" key="1"/>
<comment type="similarity">
    <text evidence="1">Belongs to the HesB/IscA family.</text>
</comment>
<proteinExistence type="inferred from homology"/>